<sequence>MIGLVGKKVGMTRIFTEDGVSIPVTVIEVEANRVTQVKDLANDGYRAIQVTTGAKKANRVTKPEAGHFAKAGVEAGRGLWEFRLAEGEEFTVGQSISVELFADVKKVDVTGTSKGKGFAGTVKRWNFRTQDATHGNSLSHRVPGSIGQNQTPGKVFKGKKMAGQMGNERVTVQSLDVVRVDAERNLLLVKGAVPGATGSDLIVKPAVKA</sequence>
<comment type="function">
    <text evidence="1">One of the primary rRNA binding proteins, it binds directly near the 3'-end of the 23S rRNA, where it nucleates assembly of the 50S subunit.</text>
</comment>
<comment type="subunit">
    <text evidence="1">Part of the 50S ribosomal subunit. Forms a cluster with proteins L14 and L19.</text>
</comment>
<comment type="PTM">
    <text evidence="1">Methylated by PrmB.</text>
</comment>
<comment type="similarity">
    <text evidence="1">Belongs to the universal ribosomal protein uL3 family.</text>
</comment>
<reference key="1">
    <citation type="journal article" date="2008" name="DNA Res.">
        <title>Complete genome sequence and comparative analysis of the wild-type commensal Escherichia coli strain SE11 isolated from a healthy adult.</title>
        <authorList>
            <person name="Oshima K."/>
            <person name="Toh H."/>
            <person name="Ogura Y."/>
            <person name="Sasamoto H."/>
            <person name="Morita H."/>
            <person name="Park S.-H."/>
            <person name="Ooka T."/>
            <person name="Iyoda S."/>
            <person name="Taylor T.D."/>
            <person name="Hayashi T."/>
            <person name="Itoh K."/>
            <person name="Hattori M."/>
        </authorList>
    </citation>
    <scope>NUCLEOTIDE SEQUENCE [LARGE SCALE GENOMIC DNA]</scope>
    <source>
        <strain>SE11</strain>
    </source>
</reference>
<accession>B6I234</accession>
<organism>
    <name type="scientific">Escherichia coli (strain SE11)</name>
    <dbReference type="NCBI Taxonomy" id="409438"/>
    <lineage>
        <taxon>Bacteria</taxon>
        <taxon>Pseudomonadati</taxon>
        <taxon>Pseudomonadota</taxon>
        <taxon>Gammaproteobacteria</taxon>
        <taxon>Enterobacterales</taxon>
        <taxon>Enterobacteriaceae</taxon>
        <taxon>Escherichia</taxon>
    </lineage>
</organism>
<gene>
    <name evidence="1" type="primary">rplC</name>
    <name type="ordered locus">ECSE_3595</name>
</gene>
<dbReference type="EMBL" id="AP009240">
    <property type="protein sequence ID" value="BAG79119.1"/>
    <property type="molecule type" value="Genomic_DNA"/>
</dbReference>
<dbReference type="RefSeq" id="WP_000579833.1">
    <property type="nucleotide sequence ID" value="NC_011415.1"/>
</dbReference>
<dbReference type="SMR" id="B6I234"/>
<dbReference type="GeneID" id="86948184"/>
<dbReference type="KEGG" id="ecy:ECSE_3595"/>
<dbReference type="HOGENOM" id="CLU_044142_4_1_6"/>
<dbReference type="Proteomes" id="UP000008199">
    <property type="component" value="Chromosome"/>
</dbReference>
<dbReference type="GO" id="GO:0022625">
    <property type="term" value="C:cytosolic large ribosomal subunit"/>
    <property type="evidence" value="ECO:0007669"/>
    <property type="project" value="TreeGrafter"/>
</dbReference>
<dbReference type="GO" id="GO:0019843">
    <property type="term" value="F:rRNA binding"/>
    <property type="evidence" value="ECO:0007669"/>
    <property type="project" value="UniProtKB-UniRule"/>
</dbReference>
<dbReference type="GO" id="GO:0003735">
    <property type="term" value="F:structural constituent of ribosome"/>
    <property type="evidence" value="ECO:0007669"/>
    <property type="project" value="InterPro"/>
</dbReference>
<dbReference type="GO" id="GO:0006412">
    <property type="term" value="P:translation"/>
    <property type="evidence" value="ECO:0007669"/>
    <property type="project" value="UniProtKB-UniRule"/>
</dbReference>
<dbReference type="FunFam" id="2.40.30.10:FF:000004">
    <property type="entry name" value="50S ribosomal protein L3"/>
    <property type="match status" value="1"/>
</dbReference>
<dbReference type="FunFam" id="3.30.160.810:FF:000001">
    <property type="entry name" value="50S ribosomal protein L3"/>
    <property type="match status" value="1"/>
</dbReference>
<dbReference type="Gene3D" id="3.30.160.810">
    <property type="match status" value="1"/>
</dbReference>
<dbReference type="Gene3D" id="2.40.30.10">
    <property type="entry name" value="Translation factors"/>
    <property type="match status" value="1"/>
</dbReference>
<dbReference type="HAMAP" id="MF_01325_B">
    <property type="entry name" value="Ribosomal_uL3_B"/>
    <property type="match status" value="1"/>
</dbReference>
<dbReference type="InterPro" id="IPR000597">
    <property type="entry name" value="Ribosomal_uL3"/>
</dbReference>
<dbReference type="InterPro" id="IPR019927">
    <property type="entry name" value="Ribosomal_uL3_bac/org-type"/>
</dbReference>
<dbReference type="InterPro" id="IPR019926">
    <property type="entry name" value="Ribosomal_uL3_CS"/>
</dbReference>
<dbReference type="InterPro" id="IPR009000">
    <property type="entry name" value="Transl_B-barrel_sf"/>
</dbReference>
<dbReference type="NCBIfam" id="TIGR03625">
    <property type="entry name" value="L3_bact"/>
    <property type="match status" value="1"/>
</dbReference>
<dbReference type="PANTHER" id="PTHR11229">
    <property type="entry name" value="50S RIBOSOMAL PROTEIN L3"/>
    <property type="match status" value="1"/>
</dbReference>
<dbReference type="PANTHER" id="PTHR11229:SF16">
    <property type="entry name" value="LARGE RIBOSOMAL SUBUNIT PROTEIN UL3C"/>
    <property type="match status" value="1"/>
</dbReference>
<dbReference type="Pfam" id="PF00297">
    <property type="entry name" value="Ribosomal_L3"/>
    <property type="match status" value="1"/>
</dbReference>
<dbReference type="SUPFAM" id="SSF50447">
    <property type="entry name" value="Translation proteins"/>
    <property type="match status" value="1"/>
</dbReference>
<dbReference type="PROSITE" id="PS00474">
    <property type="entry name" value="RIBOSOMAL_L3"/>
    <property type="match status" value="1"/>
</dbReference>
<feature type="chain" id="PRO_1000141865" description="Large ribosomal subunit protein uL3">
    <location>
        <begin position="1"/>
        <end position="209"/>
    </location>
</feature>
<feature type="modified residue" description="N5-methylglutamine" evidence="1">
    <location>
        <position position="150"/>
    </location>
</feature>
<name>RL3_ECOSE</name>
<evidence type="ECO:0000255" key="1">
    <source>
        <dbReference type="HAMAP-Rule" id="MF_01325"/>
    </source>
</evidence>
<evidence type="ECO:0000305" key="2"/>
<protein>
    <recommendedName>
        <fullName evidence="1">Large ribosomal subunit protein uL3</fullName>
    </recommendedName>
    <alternativeName>
        <fullName evidence="2">50S ribosomal protein L3</fullName>
    </alternativeName>
</protein>
<keyword id="KW-0488">Methylation</keyword>
<keyword id="KW-0687">Ribonucleoprotein</keyword>
<keyword id="KW-0689">Ribosomal protein</keyword>
<keyword id="KW-0694">RNA-binding</keyword>
<keyword id="KW-0699">rRNA-binding</keyword>
<proteinExistence type="inferred from homology"/>